<feature type="chain" id="PRO_0000314860" description="Prolyl endopeptidase-like">
    <location>
        <begin position="1"/>
        <end position="727"/>
    </location>
</feature>
<feature type="active site" description="Charge relay system" evidence="4">
    <location>
        <position position="559"/>
    </location>
</feature>
<feature type="active site" description="Charge relay system" evidence="4">
    <location>
        <position position="645"/>
    </location>
</feature>
<feature type="active site" description="Charge relay system" evidence="4">
    <location>
        <position position="690"/>
    </location>
</feature>
<feature type="splice variant" id="VSP_030401" description="In isoform 4." evidence="13">
    <location>
        <begin position="1"/>
        <end position="89"/>
    </location>
</feature>
<feature type="splice variant" id="VSP_030402" description="In isoform 3." evidence="12">
    <location>
        <begin position="323"/>
        <end position="384"/>
    </location>
</feature>
<feature type="splice variant" id="VSP_030403" description="In isoform 2." evidence="12">
    <location>
        <begin position="385"/>
        <end position="450"/>
    </location>
</feature>
<feature type="sequence variant" id="VAR_082151" description="Found in a patient with intellectual disability, short stature, chronic lung disease and failure to thrive; uncertain significance." evidence="11">
    <location>
        <begin position="483"/>
        <end position="727"/>
    </location>
</feature>
<feature type="mutagenesis site" description="Loss of catalytic activity." evidence="4">
    <original>S</original>
    <variation>A</variation>
    <location>
        <position position="559"/>
    </location>
</feature>
<feature type="mutagenesis site" description="Loss of catalytic activity." evidence="4">
    <original>D</original>
    <variation>A</variation>
    <location>
        <position position="645"/>
    </location>
</feature>
<feature type="mutagenesis site" description="Loss of catalytic activity." evidence="4">
    <original>H</original>
    <variation>A</variation>
    <location>
        <position position="690"/>
    </location>
</feature>
<feature type="mutagenesis site" description="No effect on catalytic activity." evidence="4">
    <original>H</original>
    <variation>A</variation>
    <location>
        <position position="696"/>
    </location>
</feature>
<feature type="sequence conflict" description="In Ref. 3; BAD18608." evidence="14" ref="3">
    <original>L</original>
    <variation>P</variation>
    <location>
        <position position="9"/>
    </location>
</feature>
<feature type="sequence conflict" description="In Ref. 3; BAD18608." evidence="14" ref="3">
    <original>M</original>
    <variation>T</variation>
    <location>
        <position position="90"/>
    </location>
</feature>
<feature type="sequence conflict" description="In Ref. 3; BAD18608." evidence="14" ref="3">
    <original>V</original>
    <variation>I</variation>
    <location>
        <position position="299"/>
    </location>
</feature>
<feature type="sequence conflict" description="In Ref. 6; AAI51237." evidence="14" ref="6">
    <original>L</original>
    <variation>P</variation>
    <location>
        <position position="408"/>
    </location>
</feature>
<feature type="sequence conflict" description="In Ref. 6; AAH13193." evidence="14" ref="6">
    <original>G</original>
    <variation>Y</variation>
    <location>
        <position position="511"/>
    </location>
</feature>
<feature type="sequence conflict" description="In Ref. 6; AAI51237." evidence="14" ref="6">
    <original>D</original>
    <variation>G</variation>
    <location>
        <position position="522"/>
    </location>
</feature>
<feature type="helix" evidence="16">
    <location>
        <begin position="94"/>
        <end position="97"/>
    </location>
</feature>
<feature type="strand" evidence="16">
    <location>
        <begin position="115"/>
        <end position="117"/>
    </location>
</feature>
<feature type="strand" evidence="16">
    <location>
        <begin position="120"/>
        <end position="135"/>
    </location>
</feature>
<feature type="strand" evidence="16">
    <location>
        <begin position="143"/>
        <end position="147"/>
    </location>
</feature>
<feature type="helix" evidence="16">
    <location>
        <begin position="148"/>
        <end position="151"/>
    </location>
</feature>
<feature type="strand" evidence="16">
    <location>
        <begin position="154"/>
        <end position="163"/>
    </location>
</feature>
<feature type="strand" evidence="16">
    <location>
        <begin position="167"/>
        <end position="178"/>
    </location>
</feature>
<feature type="strand" evidence="16">
    <location>
        <begin position="182"/>
        <end position="188"/>
    </location>
</feature>
<feature type="strand" evidence="16">
    <location>
        <begin position="190"/>
        <end position="192"/>
    </location>
</feature>
<feature type="strand" evidence="16">
    <location>
        <begin position="194"/>
        <end position="200"/>
    </location>
</feature>
<feature type="strand" evidence="16">
    <location>
        <begin position="202"/>
        <end position="208"/>
    </location>
</feature>
<feature type="strand" evidence="16">
    <location>
        <begin position="216"/>
        <end position="223"/>
    </location>
</feature>
<feature type="turn" evidence="16">
    <location>
        <begin position="224"/>
        <end position="226"/>
    </location>
</feature>
<feature type="strand" evidence="16">
    <location>
        <begin position="227"/>
        <end position="234"/>
    </location>
</feature>
<feature type="strand" evidence="16">
    <location>
        <begin position="245"/>
        <end position="247"/>
    </location>
</feature>
<feature type="strand" evidence="16">
    <location>
        <begin position="253"/>
        <end position="258"/>
    </location>
</feature>
<feature type="strand" evidence="16">
    <location>
        <begin position="262"/>
        <end position="270"/>
    </location>
</feature>
<feature type="strand" evidence="16">
    <location>
        <begin position="275"/>
        <end position="281"/>
    </location>
</feature>
<feature type="strand" evidence="16">
    <location>
        <begin position="290"/>
        <end position="293"/>
    </location>
</feature>
<feature type="strand" evidence="16">
    <location>
        <begin position="301"/>
        <end position="314"/>
    </location>
</feature>
<feature type="strand" evidence="16">
    <location>
        <begin position="321"/>
        <end position="330"/>
    </location>
</feature>
<feature type="helix" evidence="16">
    <location>
        <begin position="334"/>
        <end position="336"/>
    </location>
</feature>
<feature type="strand" evidence="16">
    <location>
        <begin position="338"/>
        <end position="345"/>
    </location>
</feature>
<feature type="strand" evidence="16">
    <location>
        <begin position="348"/>
        <end position="354"/>
    </location>
</feature>
<feature type="strand" evidence="16">
    <location>
        <begin position="356"/>
        <end position="365"/>
    </location>
</feature>
<feature type="strand" evidence="16">
    <location>
        <begin position="368"/>
        <end position="378"/>
    </location>
</feature>
<feature type="strand" evidence="16">
    <location>
        <begin position="381"/>
        <end position="383"/>
    </location>
</feature>
<feature type="strand" evidence="16">
    <location>
        <begin position="403"/>
        <end position="409"/>
    </location>
</feature>
<feature type="strand" evidence="16">
    <location>
        <begin position="411"/>
        <end position="413"/>
    </location>
</feature>
<feature type="strand" evidence="16">
    <location>
        <begin position="416"/>
        <end position="421"/>
    </location>
</feature>
<feature type="turn" evidence="16">
    <location>
        <begin position="422"/>
        <end position="425"/>
    </location>
</feature>
<feature type="turn" evidence="16">
    <location>
        <begin position="436"/>
        <end position="440"/>
    </location>
</feature>
<feature type="strand" evidence="16">
    <location>
        <begin position="444"/>
        <end position="449"/>
    </location>
</feature>
<feature type="strand" evidence="16">
    <location>
        <begin position="455"/>
        <end position="462"/>
    </location>
</feature>
<feature type="strand" evidence="16">
    <location>
        <begin position="464"/>
        <end position="466"/>
    </location>
</feature>
<feature type="strand" evidence="16">
    <location>
        <begin position="468"/>
        <end position="470"/>
    </location>
</feature>
<feature type="strand" evidence="16">
    <location>
        <begin position="474"/>
        <end position="478"/>
    </location>
</feature>
<feature type="helix" evidence="16">
    <location>
        <begin position="492"/>
        <end position="499"/>
    </location>
</feature>
<feature type="strand" evidence="16">
    <location>
        <begin position="503"/>
        <end position="507"/>
    </location>
</feature>
<feature type="helix" evidence="16">
    <location>
        <begin position="517"/>
        <end position="521"/>
    </location>
</feature>
<feature type="helix" evidence="16">
    <location>
        <begin position="525"/>
        <end position="528"/>
    </location>
</feature>
<feature type="helix" evidence="16">
    <location>
        <begin position="529"/>
        <end position="544"/>
    </location>
</feature>
<feature type="helix" evidence="16">
    <location>
        <begin position="550"/>
        <end position="552"/>
    </location>
</feature>
<feature type="strand" evidence="16">
    <location>
        <begin position="553"/>
        <end position="558"/>
    </location>
</feature>
<feature type="helix" evidence="16">
    <location>
        <begin position="559"/>
        <end position="561"/>
    </location>
</feature>
<feature type="helix" evidence="16">
    <location>
        <begin position="562"/>
        <end position="571"/>
    </location>
</feature>
<feature type="helix" evidence="16">
    <location>
        <begin position="573"/>
        <end position="575"/>
    </location>
</feature>
<feature type="strand" evidence="16">
    <location>
        <begin position="577"/>
        <end position="583"/>
    </location>
</feature>
<feature type="helix" evidence="16">
    <location>
        <begin position="589"/>
        <end position="592"/>
    </location>
</feature>
<feature type="helix" evidence="16">
    <location>
        <begin position="603"/>
        <end position="606"/>
    </location>
</feature>
<feature type="helix" evidence="16">
    <location>
        <begin position="610"/>
        <end position="612"/>
    </location>
</feature>
<feature type="helix" evidence="16">
    <location>
        <begin position="615"/>
        <end position="618"/>
    </location>
</feature>
<feature type="helix" evidence="16">
    <location>
        <begin position="620"/>
        <end position="623"/>
    </location>
</feature>
<feature type="helix" evidence="16">
    <location>
        <begin position="625"/>
        <end position="627"/>
    </location>
</feature>
<feature type="strand" evidence="16">
    <location>
        <begin position="636"/>
        <end position="639"/>
    </location>
</feature>
<feature type="strand" evidence="16">
    <location>
        <begin position="642"/>
        <end position="644"/>
    </location>
</feature>
<feature type="strand" evidence="16">
    <location>
        <begin position="646"/>
        <end position="648"/>
    </location>
</feature>
<feature type="helix" evidence="16">
    <location>
        <begin position="650"/>
        <end position="671"/>
    </location>
</feature>
<feature type="strand" evidence="16">
    <location>
        <begin position="680"/>
        <end position="682"/>
    </location>
</feature>
<feature type="helix" evidence="16">
    <location>
        <begin position="692"/>
        <end position="710"/>
    </location>
</feature>
<feature type="modified residue" description="N-acetylmethionine" evidence="15">
    <location sequence="Q4J6C6-4">
        <position position="1"/>
    </location>
</feature>
<comment type="function">
    <text evidence="3 4 6 8 9">Serine peptidase whose precise substrate specificity remains unclear (PubMed:16143824, PubMed:16385448, PubMed:28726805). Does not cleave peptides after a arginine or lysine residue (PubMed:16143824). Regulates trans-Golgi network morphology and sorting by regulating the membrane binding of the AP-1 complex (PubMed:23321636). May play a role in the regulation of synaptic vesicle exocytosis (PubMed:24610330).</text>
</comment>
<comment type="activity regulation">
    <text evidence="4 9">Inhibited by PMSF and Prefabloc, as well as leupeptin at high concentrations (PubMed:16385448). Partially inhibited by TPCK, a chymotrypsin inhibitor and E64, a cysteine protease inhibitor (PubMed:16385448). Not affected by 4-amidinophenyl-methanesulfonyl fluoride (APMSF), pepstatin or EDTA (PubMed:16385448). Inhibited by 1-isobutyl-3-oxo-3,5,6,7-tetrahydro-2H-cyclopenta[c]pyridine-4-carbonitrile (PubMed:28726805).</text>
</comment>
<comment type="subunit">
    <text evidence="3 6">Homodimer (PubMed:16143824). Interacts with the AP-1 complex (PubMed:23321636).</text>
</comment>
<comment type="subcellular location">
    <subcellularLocation>
        <location evidence="4 7">Cytoplasm</location>
        <location evidence="4 7">Cytosol</location>
    </subcellularLocation>
    <subcellularLocation>
        <location evidence="1">Golgi apparatus</location>
        <location evidence="1">trans-Golgi network</location>
    </subcellularLocation>
    <subcellularLocation>
        <location evidence="1">Cytoplasm</location>
        <location evidence="1">Cytoskeleton</location>
    </subcellularLocation>
    <subcellularLocation>
        <location evidence="1">Golgi apparatus</location>
    </subcellularLocation>
    <subcellularLocation>
        <location evidence="7">Nucleus</location>
    </subcellularLocation>
    <text evidence="1">Co-localizes with AP-1 in the trans-Golgi network (By similarity). Co-localizes with MAP2 and ACTB on the cytoskeleton (By similarity). Co-localizes with STX6 and GOSR2 at the Golgi apparatus (By similarity).</text>
</comment>
<comment type="alternative products">
    <event type="alternative splicing"/>
    <isoform>
        <id>Q4J6C6-1</id>
        <name>1</name>
        <sequence type="displayed"/>
    </isoform>
    <isoform>
        <id>Q4J6C6-2</id>
        <name>2</name>
        <name>D</name>
        <sequence type="described" ref="VSP_030403"/>
    </isoform>
    <isoform>
        <id>Q4J6C6-3</id>
        <name>3</name>
        <name>E</name>
        <sequence type="described" ref="VSP_030402"/>
    </isoform>
    <isoform>
        <id>Q4J6C6-4</id>
        <name>4</name>
        <sequence type="described" ref="VSP_030401"/>
    </isoform>
</comment>
<comment type="tissue specificity">
    <text evidence="2 4 7 8">Expressed in pyramidal neurons of the temporal cortex and neocortex (at protein level) (PubMed:23485813). Widely expressed (PubMed:15913950, PubMed:16385448). Expressed at higher level in brain, skeletal muscle, heart and kidney (PubMed:15913950, PubMed:16385448). Expressed at the endplates in the neuromuscular junction (PubMed:24610330).</text>
</comment>
<comment type="disease" evidence="4 5 6 7 9">
    <disease id="DI-01801">
        <name>Hypotonia-cystinuria syndrome</name>
        <acronym>HCS</acronym>
        <description>Characterized generalized hypotonia at birth, nephrolithiasis, growth hormone deficiency, minor facial dysmorphism, failure to thrive, followed by hyperphagia and rapid weight gain in late childhood.</description>
        <dbReference type="MIM" id="606407"/>
    </disease>
    <text evidence="4 5 6">The gene represented in this entry is involved in disease pathogenesis. Hypotonia-cystinuria syndrome is a contiguous gene syndrome caused by a homozygous deletion on chromosome 2p21 that disrupts the gene represented in this entry and SLC3A1 (PubMed:16385448, PubMed:21686663). A homozygous 77.4-kb deletion that disrupts the gene represented in this entry, SLC3A1 and CAMKMT, causes atypical hypotonia-cystinuria syndrome, characterized by mild to moderate intellectual disability and respiratory chain complex IV deficiency (PubMed:21686663). Patient cells exhibit a larger trans-Golgi network and a reduced redistribution of AP-1 complex, which causes impairment in AP-1 mediated membrane-cytoplasm recycling and secretion (PubMed:23321636).</text>
</comment>
<comment type="disease" evidence="8 10">
    <disease id="DI-04963">
        <name>Myasthenic syndrome, congenital, 22</name>
        <acronym>CMS22</acronym>
        <description>A form of congenital myasthenic syndrome, a group of disorders characterized by failure of neuromuscular transmission, including pre-synaptic, synaptic, and post-synaptic disorders that are not of autoimmune origin. Clinical features include easy fatigability and muscle weakness. CMS22 is an autosomal recessive form characterized by neonatal hypotonia.</description>
        <dbReference type="MIM" id="616224"/>
    </disease>
    <text>The disease is caused by variants affecting the gene represented in this entry.</text>
</comment>
<comment type="similarity">
    <text evidence="14">Belongs to the peptidase S9A family.</text>
</comment>
<comment type="sequence caution" evidence="14">
    <conflict type="erroneous gene model prediction">
        <sequence resource="EMBL-CDS" id="AAX88956"/>
    </conflict>
</comment>
<comment type="sequence caution" evidence="14">
    <conflict type="erroneous initiation">
        <sequence resource="EMBL-CDS" id="BAA23709"/>
    </conflict>
    <text>Extended N-terminus.</text>
</comment>
<accession>Q4J6C6</accession>
<accession>A7E2X6</accession>
<accession>D6W5A3</accession>
<accession>O43163</accession>
<accession>Q4J6C3</accession>
<accession>Q4J6C4</accession>
<accession>Q4ZG39</accession>
<accession>Q6ZMW7</accession>
<accession>Q96DW7</accession>
<keyword id="KW-0002">3D-structure</keyword>
<keyword id="KW-0007">Acetylation</keyword>
<keyword id="KW-0025">Alternative splicing</keyword>
<keyword id="KW-1004">Congenital myasthenic syndrome</keyword>
<keyword id="KW-0963">Cytoplasm</keyword>
<keyword id="KW-0206">Cytoskeleton</keyword>
<keyword id="KW-0225">Disease variant</keyword>
<keyword id="KW-0333">Golgi apparatus</keyword>
<keyword id="KW-0378">Hydrolase</keyword>
<keyword id="KW-0539">Nucleus</keyword>
<keyword id="KW-0645">Protease</keyword>
<keyword id="KW-1267">Proteomics identification</keyword>
<keyword id="KW-1185">Reference proteome</keyword>
<keyword id="KW-0720">Serine protease</keyword>
<dbReference type="EC" id="3.4.21.-" evidence="3 4 9"/>
<dbReference type="EMBL" id="DQ023503">
    <property type="protein sequence ID" value="AAY89634.1"/>
    <property type="molecule type" value="mRNA"/>
</dbReference>
<dbReference type="EMBL" id="DQ023504">
    <property type="protein sequence ID" value="AAY89635.1"/>
    <property type="molecule type" value="mRNA"/>
</dbReference>
<dbReference type="EMBL" id="DQ023505">
    <property type="protein sequence ID" value="AAY89636.1"/>
    <property type="molecule type" value="mRNA"/>
</dbReference>
<dbReference type="EMBL" id="DQ023506">
    <property type="protein sequence ID" value="AAY89637.1"/>
    <property type="molecule type" value="mRNA"/>
</dbReference>
<dbReference type="EMBL" id="DQ023507">
    <property type="protein sequence ID" value="AAY89638.1"/>
    <property type="molecule type" value="mRNA"/>
</dbReference>
<dbReference type="EMBL" id="AB007896">
    <property type="protein sequence ID" value="BAA23709.1"/>
    <property type="status" value="ALT_INIT"/>
    <property type="molecule type" value="mRNA"/>
</dbReference>
<dbReference type="EMBL" id="AK131463">
    <property type="protein sequence ID" value="BAD18608.1"/>
    <property type="molecule type" value="mRNA"/>
</dbReference>
<dbReference type="EMBL" id="AC013717">
    <property type="protein sequence ID" value="AAX88956.1"/>
    <property type="status" value="ALT_SEQ"/>
    <property type="molecule type" value="Genomic_DNA"/>
</dbReference>
<dbReference type="EMBL" id="CH471053">
    <property type="protein sequence ID" value="EAX00275.1"/>
    <property type="molecule type" value="Genomic_DNA"/>
</dbReference>
<dbReference type="EMBL" id="CH471053">
    <property type="protein sequence ID" value="EAX00276.1"/>
    <property type="molecule type" value="Genomic_DNA"/>
</dbReference>
<dbReference type="EMBL" id="CH471053">
    <property type="protein sequence ID" value="EAX00277.1"/>
    <property type="molecule type" value="Genomic_DNA"/>
</dbReference>
<dbReference type="EMBL" id="BC013193">
    <property type="protein sequence ID" value="AAH13193.1"/>
    <property type="molecule type" value="mRNA"/>
</dbReference>
<dbReference type="EMBL" id="BC151236">
    <property type="protein sequence ID" value="AAI51237.1"/>
    <property type="molecule type" value="mRNA"/>
</dbReference>
<dbReference type="CCDS" id="CCDS33190.1">
    <molecule id="Q4J6C6-1"/>
</dbReference>
<dbReference type="CCDS" id="CCDS42675.1">
    <molecule id="Q4J6C6-3"/>
</dbReference>
<dbReference type="CCDS" id="CCDS42676.1">
    <molecule id="Q4J6C6-2"/>
</dbReference>
<dbReference type="CCDS" id="CCDS54353.1">
    <molecule id="Q4J6C6-4"/>
</dbReference>
<dbReference type="RefSeq" id="NP_001035844.1">
    <molecule id="Q4J6C6-3"/>
    <property type="nucleotide sequence ID" value="NM_001042385.2"/>
</dbReference>
<dbReference type="RefSeq" id="NP_001035845.1">
    <molecule id="Q4J6C6-2"/>
    <property type="nucleotide sequence ID" value="NM_001042386.2"/>
</dbReference>
<dbReference type="RefSeq" id="NP_001165074.1">
    <molecule id="Q4J6C6-1"/>
    <property type="nucleotide sequence ID" value="NM_001171603.1"/>
</dbReference>
<dbReference type="RefSeq" id="NP_001165077.1">
    <molecule id="Q4J6C6-1"/>
    <property type="nucleotide sequence ID" value="NM_001171606.2"/>
</dbReference>
<dbReference type="RefSeq" id="NP_001165084.1">
    <molecule id="Q4J6C6-4"/>
    <property type="nucleotide sequence ID" value="NM_001171613.2"/>
</dbReference>
<dbReference type="RefSeq" id="NP_001165088.1">
    <molecule id="Q4J6C6-4"/>
    <property type="nucleotide sequence ID" value="NM_001171617.1"/>
</dbReference>
<dbReference type="RefSeq" id="NP_001361204.1">
    <molecule id="Q4J6C6-1"/>
    <property type="nucleotide sequence ID" value="NM_001374275.1"/>
</dbReference>
<dbReference type="RefSeq" id="NP_001361205.1">
    <molecule id="Q4J6C6-1"/>
    <property type="nucleotide sequence ID" value="NM_001374276.1"/>
</dbReference>
<dbReference type="RefSeq" id="NP_001361206.1">
    <molecule id="Q4J6C6-4"/>
    <property type="nucleotide sequence ID" value="NM_001374277.1"/>
</dbReference>
<dbReference type="RefSeq" id="NP_006027.2">
    <molecule id="Q4J6C6-1"/>
    <property type="nucleotide sequence ID" value="NM_006036.4"/>
</dbReference>
<dbReference type="RefSeq" id="XP_011531500.1">
    <property type="nucleotide sequence ID" value="XM_011533198.1"/>
</dbReference>
<dbReference type="RefSeq" id="XP_011531502.1">
    <property type="nucleotide sequence ID" value="XM_011533200.1"/>
</dbReference>
<dbReference type="RefSeq" id="XP_011531504.1">
    <property type="nucleotide sequence ID" value="XM_011533202.1"/>
</dbReference>
<dbReference type="RefSeq" id="XP_016860873.1">
    <property type="nucleotide sequence ID" value="XM_017005384.1"/>
</dbReference>
<dbReference type="RefSeq" id="XP_016860874.1">
    <molecule id="Q4J6C6-1"/>
    <property type="nucleotide sequence ID" value="XM_017005385.2"/>
</dbReference>
<dbReference type="RefSeq" id="XP_047302401.1">
    <molecule id="Q4J6C6-4"/>
    <property type="nucleotide sequence ID" value="XM_047446445.1"/>
</dbReference>
<dbReference type="RefSeq" id="XP_054200636.1">
    <molecule id="Q4J6C6-1"/>
    <property type="nucleotide sequence ID" value="XM_054344661.1"/>
</dbReference>
<dbReference type="RefSeq" id="XP_054200641.1">
    <molecule id="Q4J6C6-4"/>
    <property type="nucleotide sequence ID" value="XM_054344666.1"/>
</dbReference>
<dbReference type="PDB" id="7OBM">
    <property type="method" value="X-ray"/>
    <property type="resolution" value="3.10 A"/>
    <property type="chains" value="A=90-727"/>
</dbReference>
<dbReference type="PDB" id="8RFB">
    <property type="method" value="EM"/>
    <property type="resolution" value="4.01 A"/>
    <property type="chains" value="A=90-727"/>
</dbReference>
<dbReference type="PDBsum" id="7OBM"/>
<dbReference type="PDBsum" id="8RFB"/>
<dbReference type="EMDB" id="EMD-19117"/>
<dbReference type="SMR" id="Q4J6C6"/>
<dbReference type="BioGRID" id="114949">
    <property type="interactions" value="114"/>
</dbReference>
<dbReference type="FunCoup" id="Q4J6C6">
    <property type="interactions" value="1158"/>
</dbReference>
<dbReference type="IntAct" id="Q4J6C6">
    <property type="interactions" value="75"/>
</dbReference>
<dbReference type="MINT" id="Q4J6C6"/>
<dbReference type="STRING" id="9606.ENSP00000386543"/>
<dbReference type="BindingDB" id="Q4J6C6"/>
<dbReference type="ChEMBL" id="CHEMBL2189128"/>
<dbReference type="ESTHER" id="human-PREPL">
    <property type="family name" value="S9N_PREPL_Peptidase_S9"/>
</dbReference>
<dbReference type="MEROPS" id="S09.015"/>
<dbReference type="GlyGen" id="Q4J6C6">
    <property type="glycosylation" value="1 site, 1 O-linked glycan (1 site)"/>
</dbReference>
<dbReference type="iPTMnet" id="Q4J6C6"/>
<dbReference type="PhosphoSitePlus" id="Q4J6C6"/>
<dbReference type="SwissPalm" id="Q4J6C6"/>
<dbReference type="BioMuta" id="PREPL"/>
<dbReference type="DMDM" id="121944206"/>
<dbReference type="jPOST" id="Q4J6C6"/>
<dbReference type="MassIVE" id="Q4J6C6"/>
<dbReference type="PaxDb" id="9606-ENSP00000386543"/>
<dbReference type="PeptideAtlas" id="Q4J6C6"/>
<dbReference type="ProteomicsDB" id="62170">
    <molecule id="Q4J6C6-1"/>
</dbReference>
<dbReference type="ProteomicsDB" id="62171">
    <molecule id="Q4J6C6-2"/>
</dbReference>
<dbReference type="ProteomicsDB" id="62172">
    <molecule id="Q4J6C6-3"/>
</dbReference>
<dbReference type="ProteomicsDB" id="62173">
    <molecule id="Q4J6C6-4"/>
</dbReference>
<dbReference type="Pumba" id="Q4J6C6"/>
<dbReference type="Antibodypedia" id="29901">
    <property type="antibodies" value="127 antibodies from 25 providers"/>
</dbReference>
<dbReference type="DNASU" id="9581"/>
<dbReference type="Ensembl" id="ENST00000260648.10">
    <molecule id="Q4J6C6-1"/>
    <property type="protein sequence ID" value="ENSP00000260648.6"/>
    <property type="gene ID" value="ENSG00000138078.16"/>
</dbReference>
<dbReference type="Ensembl" id="ENST00000378511.7">
    <molecule id="Q4J6C6-3"/>
    <property type="protein sequence ID" value="ENSP00000367772.3"/>
    <property type="gene ID" value="ENSG00000138078.16"/>
</dbReference>
<dbReference type="Ensembl" id="ENST00000378520.7">
    <molecule id="Q4J6C6-2"/>
    <property type="protein sequence ID" value="ENSP00000367781.3"/>
    <property type="gene ID" value="ENSG00000138078.16"/>
</dbReference>
<dbReference type="Ensembl" id="ENST00000409272.5">
    <molecule id="Q4J6C6-1"/>
    <property type="protein sequence ID" value="ENSP00000386909.1"/>
    <property type="gene ID" value="ENSG00000138078.16"/>
</dbReference>
<dbReference type="Ensembl" id="ENST00000409411.6">
    <molecule id="Q4J6C6-4"/>
    <property type="protein sequence ID" value="ENSP00000387095.2"/>
    <property type="gene ID" value="ENSG00000138078.16"/>
</dbReference>
<dbReference type="Ensembl" id="ENST00000409936.5">
    <molecule id="Q4J6C6-1"/>
    <property type="protein sequence ID" value="ENSP00000386543.1"/>
    <property type="gene ID" value="ENSG00000138078.16"/>
</dbReference>
<dbReference type="Ensembl" id="ENST00000409957.5">
    <molecule id="Q4J6C6-4"/>
    <property type="protein sequence ID" value="ENSP00000387241.1"/>
    <property type="gene ID" value="ENSG00000138078.16"/>
</dbReference>
<dbReference type="Ensembl" id="ENST00000410081.5">
    <molecule id="Q4J6C6-1"/>
    <property type="protein sequence ID" value="ENSP00000386509.1"/>
    <property type="gene ID" value="ENSG00000138078.16"/>
</dbReference>
<dbReference type="Ensembl" id="ENST00000425263.5">
    <molecule id="Q4J6C6-1"/>
    <property type="protein sequence ID" value="ENSP00000391456.1"/>
    <property type="gene ID" value="ENSG00000138078.16"/>
</dbReference>
<dbReference type="Ensembl" id="ENST00000426481.5">
    <molecule id="Q4J6C6-1"/>
    <property type="protein sequence ID" value="ENSP00000409480.1"/>
    <property type="gene ID" value="ENSG00000138078.16"/>
</dbReference>
<dbReference type="Ensembl" id="ENST00000541738.5">
    <molecule id="Q4J6C6-4"/>
    <property type="protein sequence ID" value="ENSP00000439626.1"/>
    <property type="gene ID" value="ENSG00000138078.16"/>
</dbReference>
<dbReference type="GeneID" id="9581"/>
<dbReference type="KEGG" id="hsa:9581"/>
<dbReference type="MANE-Select" id="ENST00000409411.6">
    <molecule id="Q4J6C6-4"/>
    <property type="protein sequence ID" value="ENSP00000387095.2"/>
    <property type="RefSeq nucleotide sequence ID" value="NM_001171613.2"/>
    <property type="RefSeq protein sequence ID" value="NP_001165084.1"/>
</dbReference>
<dbReference type="UCSC" id="uc002ruf.4">
    <molecule id="Q4J6C6-1"/>
    <property type="organism name" value="human"/>
</dbReference>
<dbReference type="AGR" id="HGNC:30228"/>
<dbReference type="CTD" id="9581"/>
<dbReference type="DisGeNET" id="9581"/>
<dbReference type="GeneCards" id="PREPL"/>
<dbReference type="GeneReviews" id="PREPL"/>
<dbReference type="HGNC" id="HGNC:30228">
    <property type="gene designation" value="PREPL"/>
</dbReference>
<dbReference type="HPA" id="ENSG00000138078">
    <property type="expression patterns" value="Low tissue specificity"/>
</dbReference>
<dbReference type="MalaCards" id="PREPL"/>
<dbReference type="MIM" id="606407">
    <property type="type" value="phenotype"/>
</dbReference>
<dbReference type="MIM" id="609557">
    <property type="type" value="gene"/>
</dbReference>
<dbReference type="MIM" id="616224">
    <property type="type" value="phenotype"/>
</dbReference>
<dbReference type="neXtProt" id="NX_Q4J6C6"/>
<dbReference type="OpenTargets" id="ENSG00000138078"/>
<dbReference type="Orphanet" id="163693">
    <property type="disease" value="2p21 microdeletion syndrome"/>
</dbReference>
<dbReference type="Orphanet" id="369881">
    <property type="disease" value="2p21 microdeletion syndrome without cystinuria"/>
</dbReference>
<dbReference type="Orphanet" id="238523">
    <property type="disease" value="Atypical hypotonia-cystinuria syndrome"/>
</dbReference>
<dbReference type="Orphanet" id="163690">
    <property type="disease" value="Hypotonia-cystinuria syndrome"/>
</dbReference>
<dbReference type="PharmGKB" id="PA142671134"/>
<dbReference type="VEuPathDB" id="HostDB:ENSG00000138078"/>
<dbReference type="eggNOG" id="KOG2237">
    <property type="taxonomic scope" value="Eukaryota"/>
</dbReference>
<dbReference type="GeneTree" id="ENSGT00530000063426"/>
<dbReference type="HOGENOM" id="CLU_011290_2_1_1"/>
<dbReference type="InParanoid" id="Q4J6C6"/>
<dbReference type="OrthoDB" id="248387at2759"/>
<dbReference type="PAN-GO" id="Q4J6C6">
    <property type="GO annotations" value="2 GO annotations based on evolutionary models"/>
</dbReference>
<dbReference type="PhylomeDB" id="Q4J6C6"/>
<dbReference type="TreeFam" id="TF333309"/>
<dbReference type="BRENDA" id="3.4.21.26">
    <property type="organism ID" value="2681"/>
</dbReference>
<dbReference type="PathwayCommons" id="Q4J6C6"/>
<dbReference type="SignaLink" id="Q4J6C6"/>
<dbReference type="BioGRID-ORCS" id="9581">
    <property type="hits" value="23 hits in 1161 CRISPR screens"/>
</dbReference>
<dbReference type="ChiTaRS" id="PREPL">
    <property type="organism name" value="human"/>
</dbReference>
<dbReference type="GeneWiki" id="PREPL"/>
<dbReference type="GenomeRNAi" id="9581"/>
<dbReference type="Pharos" id="Q4J6C6">
    <property type="development level" value="Tchem"/>
</dbReference>
<dbReference type="PRO" id="PR:Q4J6C6"/>
<dbReference type="Proteomes" id="UP000005640">
    <property type="component" value="Chromosome 2"/>
</dbReference>
<dbReference type="RNAct" id="Q4J6C6">
    <property type="molecule type" value="protein"/>
</dbReference>
<dbReference type="Bgee" id="ENSG00000138078">
    <property type="expression patterns" value="Expressed in Brodmann (1909) area 23 and 211 other cell types or tissues"/>
</dbReference>
<dbReference type="ExpressionAtlas" id="Q4J6C6">
    <property type="expression patterns" value="baseline and differential"/>
</dbReference>
<dbReference type="GO" id="GO:0005856">
    <property type="term" value="C:cytoskeleton"/>
    <property type="evidence" value="ECO:0000318"/>
    <property type="project" value="GO_Central"/>
</dbReference>
<dbReference type="GO" id="GO:0005829">
    <property type="term" value="C:cytosol"/>
    <property type="evidence" value="ECO:0007669"/>
    <property type="project" value="UniProtKB-SubCell"/>
</dbReference>
<dbReference type="GO" id="GO:0005794">
    <property type="term" value="C:Golgi apparatus"/>
    <property type="evidence" value="ECO:0000318"/>
    <property type="project" value="GO_Central"/>
</dbReference>
<dbReference type="GO" id="GO:0005739">
    <property type="term" value="C:mitochondrion"/>
    <property type="evidence" value="ECO:0006056"/>
    <property type="project" value="FlyBase"/>
</dbReference>
<dbReference type="GO" id="GO:0005634">
    <property type="term" value="C:nucleus"/>
    <property type="evidence" value="ECO:0007669"/>
    <property type="project" value="UniProtKB-SubCell"/>
</dbReference>
<dbReference type="GO" id="GO:0005802">
    <property type="term" value="C:trans-Golgi network"/>
    <property type="evidence" value="ECO:0007669"/>
    <property type="project" value="Ensembl"/>
</dbReference>
<dbReference type="GO" id="GO:0008233">
    <property type="term" value="F:peptidase activity"/>
    <property type="evidence" value="ECO:0000315"/>
    <property type="project" value="UniProtKB"/>
</dbReference>
<dbReference type="GO" id="GO:0004252">
    <property type="term" value="F:serine-type endopeptidase activity"/>
    <property type="evidence" value="ECO:0007669"/>
    <property type="project" value="InterPro"/>
</dbReference>
<dbReference type="GO" id="GO:0043001">
    <property type="term" value="P:Golgi to plasma membrane protein transport"/>
    <property type="evidence" value="ECO:0000250"/>
    <property type="project" value="UniProtKB"/>
</dbReference>
<dbReference type="GO" id="GO:0006508">
    <property type="term" value="P:proteolysis"/>
    <property type="evidence" value="ECO:0007669"/>
    <property type="project" value="UniProtKB-KW"/>
</dbReference>
<dbReference type="GO" id="GO:2000300">
    <property type="term" value="P:regulation of synaptic vesicle exocytosis"/>
    <property type="evidence" value="ECO:0000315"/>
    <property type="project" value="UniProtKB"/>
</dbReference>
<dbReference type="GO" id="GO:0042147">
    <property type="term" value="P:retrograde transport, endosome to Golgi"/>
    <property type="evidence" value="ECO:0000250"/>
    <property type="project" value="UniProtKB"/>
</dbReference>
<dbReference type="FunFam" id="2.130.10.120:FF:000002">
    <property type="entry name" value="prolyl endopeptidase-like isoform X1"/>
    <property type="match status" value="1"/>
</dbReference>
<dbReference type="FunFam" id="3.40.50.1820:FF:000050">
    <property type="entry name" value="prolyl endopeptidase-like isoform X2"/>
    <property type="match status" value="1"/>
</dbReference>
<dbReference type="Gene3D" id="3.40.50.1820">
    <property type="entry name" value="alpha/beta hydrolase"/>
    <property type="match status" value="1"/>
</dbReference>
<dbReference type="Gene3D" id="2.130.10.120">
    <property type="entry name" value="Prolyl oligopeptidase, N-terminal domain"/>
    <property type="match status" value="1"/>
</dbReference>
<dbReference type="InterPro" id="IPR029058">
    <property type="entry name" value="AB_hydrolase_fold"/>
</dbReference>
<dbReference type="InterPro" id="IPR023302">
    <property type="entry name" value="Pept_S9A_N"/>
</dbReference>
<dbReference type="InterPro" id="IPR001375">
    <property type="entry name" value="Peptidase_S9_cat"/>
</dbReference>
<dbReference type="InterPro" id="IPR002470">
    <property type="entry name" value="Peptidase_S9A"/>
</dbReference>
<dbReference type="InterPro" id="IPR051543">
    <property type="entry name" value="Serine_Peptidase_S9A"/>
</dbReference>
<dbReference type="PANTHER" id="PTHR11757:SF19">
    <property type="entry name" value="PROLYL ENDOPEPTIDASE-LIKE"/>
    <property type="match status" value="1"/>
</dbReference>
<dbReference type="PANTHER" id="PTHR11757">
    <property type="entry name" value="PROTEASE FAMILY S9A OLIGOPEPTIDASE"/>
    <property type="match status" value="1"/>
</dbReference>
<dbReference type="Pfam" id="PF00326">
    <property type="entry name" value="Peptidase_S9"/>
    <property type="match status" value="1"/>
</dbReference>
<dbReference type="Pfam" id="PF02897">
    <property type="entry name" value="Peptidase_S9_N"/>
    <property type="match status" value="1"/>
</dbReference>
<dbReference type="PRINTS" id="PR00862">
    <property type="entry name" value="PROLIGOPTASE"/>
</dbReference>
<dbReference type="SUPFAM" id="SSF53474">
    <property type="entry name" value="alpha/beta-Hydrolases"/>
    <property type="match status" value="1"/>
</dbReference>
<dbReference type="SUPFAM" id="SSF50993">
    <property type="entry name" value="Peptidase/esterase 'gauge' domain"/>
    <property type="match status" value="1"/>
</dbReference>
<organism>
    <name type="scientific">Homo sapiens</name>
    <name type="common">Human</name>
    <dbReference type="NCBI Taxonomy" id="9606"/>
    <lineage>
        <taxon>Eukaryota</taxon>
        <taxon>Metazoa</taxon>
        <taxon>Chordata</taxon>
        <taxon>Craniata</taxon>
        <taxon>Vertebrata</taxon>
        <taxon>Euteleostomi</taxon>
        <taxon>Mammalia</taxon>
        <taxon>Eutheria</taxon>
        <taxon>Euarchontoglires</taxon>
        <taxon>Primates</taxon>
        <taxon>Haplorrhini</taxon>
        <taxon>Catarrhini</taxon>
        <taxon>Hominidae</taxon>
        <taxon>Homo</taxon>
    </lineage>
</organism>
<evidence type="ECO:0000250" key="1">
    <source>
        <dbReference type="UniProtKB" id="Q8C167"/>
    </source>
</evidence>
<evidence type="ECO:0000269" key="2">
    <source>
    </source>
</evidence>
<evidence type="ECO:0000269" key="3">
    <source>
    </source>
</evidence>
<evidence type="ECO:0000269" key="4">
    <source>
    </source>
</evidence>
<evidence type="ECO:0000269" key="5">
    <source>
    </source>
</evidence>
<evidence type="ECO:0000269" key="6">
    <source>
    </source>
</evidence>
<evidence type="ECO:0000269" key="7">
    <source>
    </source>
</evidence>
<evidence type="ECO:0000269" key="8">
    <source>
    </source>
</evidence>
<evidence type="ECO:0000269" key="9">
    <source>
    </source>
</evidence>
<evidence type="ECO:0000269" key="10">
    <source>
    </source>
</evidence>
<evidence type="ECO:0000269" key="11">
    <source>
    </source>
</evidence>
<evidence type="ECO:0000303" key="12">
    <source>
    </source>
</evidence>
<evidence type="ECO:0000303" key="13">
    <source>
    </source>
</evidence>
<evidence type="ECO:0000305" key="14"/>
<evidence type="ECO:0007744" key="15">
    <source>
    </source>
</evidence>
<evidence type="ECO:0007829" key="16">
    <source>
        <dbReference type="PDB" id="7OBM"/>
    </source>
</evidence>
<name>PPCEL_HUMAN</name>
<gene>
    <name type="primary">PREPL</name>
    <name type="synonym">KIAA0436</name>
</gene>
<reference key="1">
    <citation type="journal article" date="2005" name="Genomics">
        <title>The 2p21 deletion syndrome: characterization of the transcription content.</title>
        <authorList>
            <person name="Parvari R."/>
            <person name="Gonen Y."/>
            <person name="Alshafee I."/>
            <person name="Buriakovsky S."/>
            <person name="Regev K."/>
            <person name="Hershkovitz E."/>
        </authorList>
    </citation>
    <scope>NUCLEOTIDE SEQUENCE [MRNA] (ISOFORMS 1; 2 AND 3)</scope>
    <scope>TISSUE SPECIFICITY</scope>
</reference>
<reference key="2">
    <citation type="journal article" date="1997" name="DNA Res.">
        <title>Prediction of the coding sequences of unidentified human genes. VIII. 78 new cDNA clones from brain which code for large proteins in vitro.</title>
        <authorList>
            <person name="Ishikawa K."/>
            <person name="Nagase T."/>
            <person name="Nakajima D."/>
            <person name="Seki N."/>
            <person name="Ohira M."/>
            <person name="Miyajima N."/>
            <person name="Tanaka A."/>
            <person name="Kotani H."/>
            <person name="Nomura N."/>
            <person name="Ohara O."/>
        </authorList>
    </citation>
    <scope>NUCLEOTIDE SEQUENCE [LARGE SCALE MRNA] (ISOFORM 4)</scope>
    <source>
        <tissue>Brain</tissue>
    </source>
</reference>
<reference key="3">
    <citation type="journal article" date="2004" name="Nat. Genet.">
        <title>Complete sequencing and characterization of 21,243 full-length human cDNAs.</title>
        <authorList>
            <person name="Ota T."/>
            <person name="Suzuki Y."/>
            <person name="Nishikawa T."/>
            <person name="Otsuki T."/>
            <person name="Sugiyama T."/>
            <person name="Irie R."/>
            <person name="Wakamatsu A."/>
            <person name="Hayashi K."/>
            <person name="Sato H."/>
            <person name="Nagai K."/>
            <person name="Kimura K."/>
            <person name="Makita H."/>
            <person name="Sekine M."/>
            <person name="Obayashi M."/>
            <person name="Nishi T."/>
            <person name="Shibahara T."/>
            <person name="Tanaka T."/>
            <person name="Ishii S."/>
            <person name="Yamamoto J."/>
            <person name="Saito K."/>
            <person name="Kawai Y."/>
            <person name="Isono Y."/>
            <person name="Nakamura Y."/>
            <person name="Nagahari K."/>
            <person name="Murakami K."/>
            <person name="Yasuda T."/>
            <person name="Iwayanagi T."/>
            <person name="Wagatsuma M."/>
            <person name="Shiratori A."/>
            <person name="Sudo H."/>
            <person name="Hosoiri T."/>
            <person name="Kaku Y."/>
            <person name="Kodaira H."/>
            <person name="Kondo H."/>
            <person name="Sugawara M."/>
            <person name="Takahashi M."/>
            <person name="Kanda K."/>
            <person name="Yokoi T."/>
            <person name="Furuya T."/>
            <person name="Kikkawa E."/>
            <person name="Omura Y."/>
            <person name="Abe K."/>
            <person name="Kamihara K."/>
            <person name="Katsuta N."/>
            <person name="Sato K."/>
            <person name="Tanikawa M."/>
            <person name="Yamazaki M."/>
            <person name="Ninomiya K."/>
            <person name="Ishibashi T."/>
            <person name="Yamashita H."/>
            <person name="Murakawa K."/>
            <person name="Fujimori K."/>
            <person name="Tanai H."/>
            <person name="Kimata M."/>
            <person name="Watanabe M."/>
            <person name="Hiraoka S."/>
            <person name="Chiba Y."/>
            <person name="Ishida S."/>
            <person name="Ono Y."/>
            <person name="Takiguchi S."/>
            <person name="Watanabe S."/>
            <person name="Yosida M."/>
            <person name="Hotuta T."/>
            <person name="Kusano J."/>
            <person name="Kanehori K."/>
            <person name="Takahashi-Fujii A."/>
            <person name="Hara H."/>
            <person name="Tanase T.-O."/>
            <person name="Nomura Y."/>
            <person name="Togiya S."/>
            <person name="Komai F."/>
            <person name="Hara R."/>
            <person name="Takeuchi K."/>
            <person name="Arita M."/>
            <person name="Imose N."/>
            <person name="Musashino K."/>
            <person name="Yuuki H."/>
            <person name="Oshima A."/>
            <person name="Sasaki N."/>
            <person name="Aotsuka S."/>
            <person name="Yoshikawa Y."/>
            <person name="Matsunawa H."/>
            <person name="Ichihara T."/>
            <person name="Shiohata N."/>
            <person name="Sano S."/>
            <person name="Moriya S."/>
            <person name="Momiyama H."/>
            <person name="Satoh N."/>
            <person name="Takami S."/>
            <person name="Terashima Y."/>
            <person name="Suzuki O."/>
            <person name="Nakagawa S."/>
            <person name="Senoh A."/>
            <person name="Mizoguchi H."/>
            <person name="Goto Y."/>
            <person name="Shimizu F."/>
            <person name="Wakebe H."/>
            <person name="Hishigaki H."/>
            <person name="Watanabe T."/>
            <person name="Sugiyama A."/>
            <person name="Takemoto M."/>
            <person name="Kawakami B."/>
            <person name="Yamazaki M."/>
            <person name="Watanabe K."/>
            <person name="Kumagai A."/>
            <person name="Itakura S."/>
            <person name="Fukuzumi Y."/>
            <person name="Fujimori Y."/>
            <person name="Komiyama M."/>
            <person name="Tashiro H."/>
            <person name="Tanigami A."/>
            <person name="Fujiwara T."/>
            <person name="Ono T."/>
            <person name="Yamada K."/>
            <person name="Fujii Y."/>
            <person name="Ozaki K."/>
            <person name="Hirao M."/>
            <person name="Ohmori Y."/>
            <person name="Kawabata A."/>
            <person name="Hikiji T."/>
            <person name="Kobatake N."/>
            <person name="Inagaki H."/>
            <person name="Ikema Y."/>
            <person name="Okamoto S."/>
            <person name="Okitani R."/>
            <person name="Kawakami T."/>
            <person name="Noguchi S."/>
            <person name="Itoh T."/>
            <person name="Shigeta K."/>
            <person name="Senba T."/>
            <person name="Matsumura K."/>
            <person name="Nakajima Y."/>
            <person name="Mizuno T."/>
            <person name="Morinaga M."/>
            <person name="Sasaki M."/>
            <person name="Togashi T."/>
            <person name="Oyama M."/>
            <person name="Hata H."/>
            <person name="Watanabe M."/>
            <person name="Komatsu T."/>
            <person name="Mizushima-Sugano J."/>
            <person name="Satoh T."/>
            <person name="Shirai Y."/>
            <person name="Takahashi Y."/>
            <person name="Nakagawa K."/>
            <person name="Okumura K."/>
            <person name="Nagase T."/>
            <person name="Nomura N."/>
            <person name="Kikuchi H."/>
            <person name="Masuho Y."/>
            <person name="Yamashita R."/>
            <person name="Nakai K."/>
            <person name="Yada T."/>
            <person name="Nakamura Y."/>
            <person name="Ohara O."/>
            <person name="Isogai T."/>
            <person name="Sugano S."/>
        </authorList>
    </citation>
    <scope>NUCLEOTIDE SEQUENCE [LARGE SCALE MRNA] (ISOFORM 1)</scope>
    <source>
        <tissue>Testis</tissue>
    </source>
</reference>
<reference key="4">
    <citation type="journal article" date="2005" name="Nature">
        <title>Generation and annotation of the DNA sequences of human chromosomes 2 and 4.</title>
        <authorList>
            <person name="Hillier L.W."/>
            <person name="Graves T.A."/>
            <person name="Fulton R.S."/>
            <person name="Fulton L.A."/>
            <person name="Pepin K.H."/>
            <person name="Minx P."/>
            <person name="Wagner-McPherson C."/>
            <person name="Layman D."/>
            <person name="Wylie K."/>
            <person name="Sekhon M."/>
            <person name="Becker M.C."/>
            <person name="Fewell G.A."/>
            <person name="Delehaunty K.D."/>
            <person name="Miner T.L."/>
            <person name="Nash W.E."/>
            <person name="Kremitzki C."/>
            <person name="Oddy L."/>
            <person name="Du H."/>
            <person name="Sun H."/>
            <person name="Bradshaw-Cordum H."/>
            <person name="Ali J."/>
            <person name="Carter J."/>
            <person name="Cordes M."/>
            <person name="Harris A."/>
            <person name="Isak A."/>
            <person name="van Brunt A."/>
            <person name="Nguyen C."/>
            <person name="Du F."/>
            <person name="Courtney L."/>
            <person name="Kalicki J."/>
            <person name="Ozersky P."/>
            <person name="Abbott S."/>
            <person name="Armstrong J."/>
            <person name="Belter E.A."/>
            <person name="Caruso L."/>
            <person name="Cedroni M."/>
            <person name="Cotton M."/>
            <person name="Davidson T."/>
            <person name="Desai A."/>
            <person name="Elliott G."/>
            <person name="Erb T."/>
            <person name="Fronick C."/>
            <person name="Gaige T."/>
            <person name="Haakenson W."/>
            <person name="Haglund K."/>
            <person name="Holmes A."/>
            <person name="Harkins R."/>
            <person name="Kim K."/>
            <person name="Kruchowski S.S."/>
            <person name="Strong C.M."/>
            <person name="Grewal N."/>
            <person name="Goyea E."/>
            <person name="Hou S."/>
            <person name="Levy A."/>
            <person name="Martinka S."/>
            <person name="Mead K."/>
            <person name="McLellan M.D."/>
            <person name="Meyer R."/>
            <person name="Randall-Maher J."/>
            <person name="Tomlinson C."/>
            <person name="Dauphin-Kohlberg S."/>
            <person name="Kozlowicz-Reilly A."/>
            <person name="Shah N."/>
            <person name="Swearengen-Shahid S."/>
            <person name="Snider J."/>
            <person name="Strong J.T."/>
            <person name="Thompson J."/>
            <person name="Yoakum M."/>
            <person name="Leonard S."/>
            <person name="Pearman C."/>
            <person name="Trani L."/>
            <person name="Radionenko M."/>
            <person name="Waligorski J.E."/>
            <person name="Wang C."/>
            <person name="Rock S.M."/>
            <person name="Tin-Wollam A.-M."/>
            <person name="Maupin R."/>
            <person name="Latreille P."/>
            <person name="Wendl M.C."/>
            <person name="Yang S.-P."/>
            <person name="Pohl C."/>
            <person name="Wallis J.W."/>
            <person name="Spieth J."/>
            <person name="Bieri T.A."/>
            <person name="Berkowicz N."/>
            <person name="Nelson J.O."/>
            <person name="Osborne J."/>
            <person name="Ding L."/>
            <person name="Meyer R."/>
            <person name="Sabo A."/>
            <person name="Shotland Y."/>
            <person name="Sinha P."/>
            <person name="Wohldmann P.E."/>
            <person name="Cook L.L."/>
            <person name="Hickenbotham M.T."/>
            <person name="Eldred J."/>
            <person name="Williams D."/>
            <person name="Jones T.A."/>
            <person name="She X."/>
            <person name="Ciccarelli F.D."/>
            <person name="Izaurralde E."/>
            <person name="Taylor J."/>
            <person name="Schmutz J."/>
            <person name="Myers R.M."/>
            <person name="Cox D.R."/>
            <person name="Huang X."/>
            <person name="McPherson J.D."/>
            <person name="Mardis E.R."/>
            <person name="Clifton S.W."/>
            <person name="Warren W.C."/>
            <person name="Chinwalla A.T."/>
            <person name="Eddy S.R."/>
            <person name="Marra M.A."/>
            <person name="Ovcharenko I."/>
            <person name="Furey T.S."/>
            <person name="Miller W."/>
            <person name="Eichler E.E."/>
            <person name="Bork P."/>
            <person name="Suyama M."/>
            <person name="Torrents D."/>
            <person name="Waterston R.H."/>
            <person name="Wilson R.K."/>
        </authorList>
    </citation>
    <scope>NUCLEOTIDE SEQUENCE [LARGE SCALE GENOMIC DNA]</scope>
</reference>
<reference key="5">
    <citation type="submission" date="2005-09" db="EMBL/GenBank/DDBJ databases">
        <authorList>
            <person name="Mural R.J."/>
            <person name="Istrail S."/>
            <person name="Sutton G.G."/>
            <person name="Florea L."/>
            <person name="Halpern A.L."/>
            <person name="Mobarry C.M."/>
            <person name="Lippert R."/>
            <person name="Walenz B."/>
            <person name="Shatkay H."/>
            <person name="Dew I."/>
            <person name="Miller J.R."/>
            <person name="Flanigan M.J."/>
            <person name="Edwards N.J."/>
            <person name="Bolanos R."/>
            <person name="Fasulo D."/>
            <person name="Halldorsson B.V."/>
            <person name="Hannenhalli S."/>
            <person name="Turner R."/>
            <person name="Yooseph S."/>
            <person name="Lu F."/>
            <person name="Nusskern D.R."/>
            <person name="Shue B.C."/>
            <person name="Zheng X.H."/>
            <person name="Zhong F."/>
            <person name="Delcher A.L."/>
            <person name="Huson D.H."/>
            <person name="Kravitz S.A."/>
            <person name="Mouchard L."/>
            <person name="Reinert K."/>
            <person name="Remington K.A."/>
            <person name="Clark A.G."/>
            <person name="Waterman M.S."/>
            <person name="Eichler E.E."/>
            <person name="Adams M.D."/>
            <person name="Hunkapiller M.W."/>
            <person name="Myers E.W."/>
            <person name="Venter J.C."/>
        </authorList>
    </citation>
    <scope>NUCLEOTIDE SEQUENCE [LARGE SCALE GENOMIC DNA]</scope>
</reference>
<reference key="6">
    <citation type="journal article" date="2004" name="Genome Res.">
        <title>The status, quality, and expansion of the NIH full-length cDNA project: the Mammalian Gene Collection (MGC).</title>
        <authorList>
            <consortium name="The MGC Project Team"/>
        </authorList>
    </citation>
    <scope>NUCLEOTIDE SEQUENCE [LARGE SCALE MRNA] (ISOFORM 1)</scope>
    <source>
        <tissue>Bone</tissue>
    </source>
</reference>
<reference key="7">
    <citation type="journal article" date="2005" name="Cell. Mol. Life Sci.">
        <title>The PREPL A protein, a new member of the prolyl oligopeptidase family, lacking catalytic activity.</title>
        <authorList>
            <person name="Szeltner Z."/>
            <person name="Alshafee I."/>
            <person name="Juhasz T."/>
            <person name="Parvari R."/>
            <person name="Polgar L."/>
        </authorList>
    </citation>
    <scope>FUNCTION</scope>
    <scope>CATALYTIC ACTIVITY</scope>
    <scope>SUBUNIT</scope>
</reference>
<reference key="8">
    <citation type="journal article" date="2006" name="Am. J. Hum. Genet.">
        <title>Deletion of PREPL, a gene encoding a putative serine oligopeptidase, in patients with hypotonia-cystinuria syndrome.</title>
        <authorList>
            <person name="Jaeken J."/>
            <person name="Martens K."/>
            <person name="Francois I."/>
            <person name="Eyskens F."/>
            <person name="Lecointre C."/>
            <person name="Derua R."/>
            <person name="Meulemans S."/>
            <person name="Slootstra J.W."/>
            <person name="Waelkens E."/>
            <person name="de Zegher F."/>
            <person name="Creemers J.W.M."/>
            <person name="Matthijs G."/>
        </authorList>
    </citation>
    <scope>FUNCTION</scope>
    <scope>CATALYTIC ACTIVITY</scope>
    <scope>SUBCELLULAR LOCATION</scope>
    <scope>ACTIVITY REGULATION</scope>
    <scope>TISSUE SPECIFICITY</scope>
    <scope>INVOLVEMENT IN HCS</scope>
    <scope>ACTIVE SITE</scope>
    <scope>MUTAGENESIS OF SER-559; ASP-645; HIS-690 AND HIS-696</scope>
</reference>
<reference key="9">
    <citation type="journal article" date="2009" name="BMJ Case Rep.">
        <title>Deletion of C2orf34, PREPL and SLC3A1 causes atypical hypotonia-cystinuria syndrome.</title>
        <authorList>
            <person name="Chabrol B."/>
            <person name="Martens K."/>
            <person name="Meulemans S."/>
            <person name="Cano A."/>
            <person name="Jaeken J."/>
            <person name="Matthijs G."/>
            <person name="Creemers J.W."/>
        </authorList>
    </citation>
    <scope>INVOLVEMENT IN HCS</scope>
</reference>
<reference key="10">
    <citation type="journal article" date="2012" name="Proc. Natl. Acad. Sci. U.S.A.">
        <title>N-terminal acetylome analyses and functional insights of the N-terminal acetyltransferase NatB.</title>
        <authorList>
            <person name="Van Damme P."/>
            <person name="Lasa M."/>
            <person name="Polevoda B."/>
            <person name="Gazquez C."/>
            <person name="Elosegui-Artola A."/>
            <person name="Kim D.S."/>
            <person name="De Juan-Pardo E."/>
            <person name="Demeyer K."/>
            <person name="Hole K."/>
            <person name="Larrea E."/>
            <person name="Timmerman E."/>
            <person name="Prieto J."/>
            <person name="Arnesen T."/>
            <person name="Sherman F."/>
            <person name="Gevaert K."/>
            <person name="Aldabe R."/>
        </authorList>
    </citation>
    <scope>ACETYLATION [LARGE SCALE ANALYSIS] AT MET-1 (ISOFORM 4)</scope>
    <scope>IDENTIFICATION BY MASS SPECTROMETRY [LARGE SCALE ANALYSIS]</scope>
</reference>
<reference key="11">
    <citation type="journal article" date="2013" name="J. Cell Sci.">
        <title>Trans-Golgi network morphology and sorting is regulated by prolyl-oligopeptidase-like protein PREPL and the AP-1 complex subunit mu1A.</title>
        <authorList>
            <person name="Radhakrishnan K."/>
            <person name="Baltes J."/>
            <person name="Creemers J.W."/>
            <person name="Schu P."/>
        </authorList>
    </citation>
    <scope>FUNCTION</scope>
    <scope>SUBUNIT</scope>
    <scope>INVOLVEMENT IN HCS</scope>
</reference>
<reference key="12">
    <citation type="journal article" date="2013" name="Neuroscience">
        <title>Cellular and ultra structural evidence for cytoskeletal localization of prolyl endopeptidase-like protein in neurons.</title>
        <authorList>
            <person name="Morawski M."/>
            <person name="Nuytens K."/>
            <person name="Juhasz T."/>
            <person name="Zeitschel U."/>
            <person name="Seeger G."/>
            <person name="Waelkens E."/>
            <person name="Regal L."/>
            <person name="Schulz I."/>
            <person name="Arendt T."/>
            <person name="Szeltner Z."/>
            <person name="Creemers J."/>
            <person name="Rossner S."/>
        </authorList>
    </citation>
    <scope>SUBCELLULAR LOCATION</scope>
    <scope>TISSUE SPECIFICITY</scope>
    <scope>INVOLVEMENT IN HCS</scope>
</reference>
<reference key="13">
    <citation type="journal article" date="2014" name="Neurology">
        <title>PREPL deficiency with or without cystinuria causes a novel myasthenic syndrome.</title>
        <authorList>
            <person name="Regal L."/>
            <person name="Shen X.M."/>
            <person name="Selcen D."/>
            <person name="Verhille C."/>
            <person name="Meulemans S."/>
            <person name="Creemers J.W."/>
            <person name="Engel A.G."/>
        </authorList>
    </citation>
    <scope>FUNCTION</scope>
    <scope>TISSUE SPECIFICITY</scope>
    <scope>INVOLVEMENT IN CMS22</scope>
</reference>
<reference key="14">
    <citation type="journal article" date="2018" name="Genet. Med.">
        <title>PREPL deficiency: delineation of the phenotype and development of a functional blood assay.</title>
        <authorList>
            <person name="Regal L."/>
            <person name="Maartensson E."/>
            <person name="Maystadt I."/>
            <person name="Voermans N."/>
            <person name="Lederer D."/>
            <person name="Burlina A."/>
            <person name="Juan Fita M.J."/>
            <person name="Hoogeboom A.J.M."/>
            <person name="Olsson Engman M."/>
            <person name="Hollemans T."/>
            <person name="Schouten M."/>
            <person name="Meulemans S."/>
            <person name="Jonson T."/>
            <person name="Francois I."/>
            <person name="Gil Ortega D."/>
            <person name="Kamsteeg E.J."/>
            <person name="Creemers J.W.M."/>
        </authorList>
    </citation>
    <scope>FUNCTION</scope>
    <scope>CATALYTIC ACTIVITY</scope>
    <scope>ACTIVITY REGULATION</scope>
    <scope>INVOLVEMENT IN HCS</scope>
</reference>
<reference key="15">
    <citation type="journal article" date="2018" name="J. Hum. Genet.">
        <title>The second point mutation in PREPL: a case report and literature review.</title>
        <authorList>
            <person name="Silva S."/>
            <person name="Miyake N."/>
            <person name="Tapia C."/>
            <person name="Matsumoto N."/>
        </authorList>
    </citation>
    <scope>INVOLVEMENT IN CMS22</scope>
</reference>
<reference key="16">
    <citation type="journal article" date="2019" name="Genet. Med.">
        <title>Autozygome and high throughput confirmation of disease genes candidacy.</title>
        <authorList>
            <person name="Maddirevula S."/>
            <person name="Alzahrani F."/>
            <person name="Al-Owain M."/>
            <person name="Al Muhaizea M.A."/>
            <person name="Kayyali H.R."/>
            <person name="AlHashem A."/>
            <person name="Rahbeeni Z."/>
            <person name="Al-Otaibi M."/>
            <person name="Alzaidan H.I."/>
            <person name="Balobaid A."/>
            <person name="El Khashab H.Y."/>
            <person name="Bubshait D.K."/>
            <person name="Faden M."/>
            <person name="Yamani S.A."/>
            <person name="Dabbagh O."/>
            <person name="Al-Mureikhi M."/>
            <person name="Jasser A.A."/>
            <person name="Alsaif H.S."/>
            <person name="Alluhaydan I."/>
            <person name="Seidahmed M.Z."/>
            <person name="Alabbasi B.H."/>
            <person name="Almogarri I."/>
            <person name="Kurdi W."/>
            <person name="Akleh H."/>
            <person name="Qari A."/>
            <person name="Al Tala S.M."/>
            <person name="Alhomaidi S."/>
            <person name="Kentab A.Y."/>
            <person name="Salih M.A."/>
            <person name="Chedrawi A."/>
            <person name="Alameer S."/>
            <person name="Tabarki B."/>
            <person name="Shamseldin H.E."/>
            <person name="Patel N."/>
            <person name="Ibrahim N."/>
            <person name="Abdulwahab F."/>
            <person name="Samira M."/>
            <person name="Goljan E."/>
            <person name="Abouelhoda M."/>
            <person name="Meyer B.F."/>
            <person name="Hashem M."/>
            <person name="Shaheen R."/>
            <person name="AlShahwan S."/>
            <person name="Alfadhel M."/>
            <person name="Ben-Omran T."/>
            <person name="Al-Qattan M.M."/>
            <person name="Monies D."/>
            <person name="Alkuraya F.S."/>
        </authorList>
    </citation>
    <scope>VARIANT 483-GLY--PHE-727 DEL</scope>
</reference>
<protein>
    <recommendedName>
        <fullName>Prolyl endopeptidase-like</fullName>
        <ecNumber evidence="3 4 9">3.4.21.-</ecNumber>
    </recommendedName>
    <alternativeName>
        <fullName>Prolylendopeptidase-like</fullName>
    </alternativeName>
</protein>
<proteinExistence type="evidence at protein level"/>
<sequence length="727" mass="83927">MQQKTKLFLQALKYSIPHLGKCMQKQHLNHYNFADHCYNRIKLKKYHLTKCLQNKPKISELARNIPSRSFSCKDLQPVKQENEKPLPENMDAFEKVRTKLETQPQEEYEIINVEVKHGGFVYYQEGCCLVRSKDEEADNDNYEVLFNLEELKLDQPFIDCIRVAPDEKYVAAKIRTEDSEASTCVIIKLSDQPVMEASFPNVSSFEWVKDEEDEDVLFYTFQRNLRCHDVYRATFGDNKRNERFYTEKDPSYFVFLYLTKDSRFLTINIMNKTTSEVWLIDGLSPWDPPVLIQKRIHGVLYYVEHRDDELYILTNVGEPTEFKLMRTAADTPAIMNWDLFFTMKRNTKVIDLDMFKDHCVLFLKHSNLLYVNVIGLADDSVRSLKLPPWACGFIMDTNSDPKNCPFQLCSPIRPPKYYTYKFAEGKLFEETGHEDPITKTSRVLRLEAKSKDGKLVPMTVFHKTDSEDLQKKPLLVHVYGAYGMDLKMNFRPERRVLVDDGWILAYCHVRGGGELGLQWHADGRLTKKLNGLADLEACIKTLHGQGFSQPSLTTLTAFSAGGVLAGALCNSNPELVRAVTLEAPFLDVLNTMMDTTLPLTLEELEEWGNPSSDEKHKNYIKRYCPYQNIKPQHYPSIHITAYENDERVPLKGIVSYTEKLKEAIAEHAKDTGEGYQTPNIILDIQPGGNHVIEDSHKKITAQIKFLYEELGLDSTSVFEDLKKYLKF</sequence>